<dbReference type="EC" id="2.6.1.16" evidence="1"/>
<dbReference type="EMBL" id="AE001273">
    <property type="protein sequence ID" value="AAC68413.1"/>
    <property type="molecule type" value="Genomic_DNA"/>
</dbReference>
<dbReference type="PIR" id="B71467">
    <property type="entry name" value="B71467"/>
</dbReference>
<dbReference type="RefSeq" id="NP_220337.1">
    <property type="nucleotide sequence ID" value="NC_000117.1"/>
</dbReference>
<dbReference type="RefSeq" id="WP_010725356.1">
    <property type="nucleotide sequence ID" value="NC_000117.1"/>
</dbReference>
<dbReference type="SMR" id="O84823"/>
<dbReference type="FunCoup" id="O84823">
    <property type="interactions" value="156"/>
</dbReference>
<dbReference type="STRING" id="272561.CT_816"/>
<dbReference type="EnsemblBacteria" id="AAC68413">
    <property type="protein sequence ID" value="AAC68413"/>
    <property type="gene ID" value="CT_816"/>
</dbReference>
<dbReference type="GeneID" id="884625"/>
<dbReference type="KEGG" id="ctr:CT_816"/>
<dbReference type="PATRIC" id="fig|272561.5.peg.901"/>
<dbReference type="HOGENOM" id="CLU_012520_5_2_0"/>
<dbReference type="InParanoid" id="O84823"/>
<dbReference type="OrthoDB" id="106547at2"/>
<dbReference type="Proteomes" id="UP000000431">
    <property type="component" value="Chromosome"/>
</dbReference>
<dbReference type="GO" id="GO:0005829">
    <property type="term" value="C:cytosol"/>
    <property type="evidence" value="ECO:0000318"/>
    <property type="project" value="GO_Central"/>
</dbReference>
<dbReference type="GO" id="GO:0097367">
    <property type="term" value="F:carbohydrate derivative binding"/>
    <property type="evidence" value="ECO:0007669"/>
    <property type="project" value="InterPro"/>
</dbReference>
<dbReference type="GO" id="GO:0004360">
    <property type="term" value="F:glutamine-fructose-6-phosphate transaminase (isomerizing) activity"/>
    <property type="evidence" value="ECO:0000318"/>
    <property type="project" value="GO_Central"/>
</dbReference>
<dbReference type="GO" id="GO:0005975">
    <property type="term" value="P:carbohydrate metabolic process"/>
    <property type="evidence" value="ECO:0007669"/>
    <property type="project" value="UniProtKB-UniRule"/>
</dbReference>
<dbReference type="GO" id="GO:0006002">
    <property type="term" value="P:fructose 6-phosphate metabolic process"/>
    <property type="evidence" value="ECO:0000318"/>
    <property type="project" value="GO_Central"/>
</dbReference>
<dbReference type="GO" id="GO:0006487">
    <property type="term" value="P:protein N-linked glycosylation"/>
    <property type="evidence" value="ECO:0000318"/>
    <property type="project" value="GO_Central"/>
</dbReference>
<dbReference type="GO" id="GO:0006047">
    <property type="term" value="P:UDP-N-acetylglucosamine metabolic process"/>
    <property type="evidence" value="ECO:0000318"/>
    <property type="project" value="GO_Central"/>
</dbReference>
<dbReference type="CDD" id="cd00714">
    <property type="entry name" value="GFAT"/>
    <property type="match status" value="1"/>
</dbReference>
<dbReference type="CDD" id="cd05008">
    <property type="entry name" value="SIS_GlmS_GlmD_1"/>
    <property type="match status" value="1"/>
</dbReference>
<dbReference type="CDD" id="cd05009">
    <property type="entry name" value="SIS_GlmS_GlmD_2"/>
    <property type="match status" value="1"/>
</dbReference>
<dbReference type="FunFam" id="3.40.50.10490:FF:000001">
    <property type="entry name" value="Glutamine--fructose-6-phosphate aminotransferase [isomerizing]"/>
    <property type="match status" value="1"/>
</dbReference>
<dbReference type="FunFam" id="3.40.50.10490:FF:000072">
    <property type="entry name" value="Glutamine--fructose-6-phosphate aminotransferase [isomerizing]"/>
    <property type="match status" value="1"/>
</dbReference>
<dbReference type="FunFam" id="3.60.20.10:FF:000006">
    <property type="entry name" value="Glutamine--fructose-6-phosphate aminotransferase [isomerizing]"/>
    <property type="match status" value="1"/>
</dbReference>
<dbReference type="Gene3D" id="3.40.50.10490">
    <property type="entry name" value="Glucose-6-phosphate isomerase like protein, domain 1"/>
    <property type="match status" value="2"/>
</dbReference>
<dbReference type="Gene3D" id="3.60.20.10">
    <property type="entry name" value="Glutamine Phosphoribosylpyrophosphate, subunit 1, domain 1"/>
    <property type="match status" value="1"/>
</dbReference>
<dbReference type="HAMAP" id="MF_00164">
    <property type="entry name" value="GlmS"/>
    <property type="match status" value="1"/>
</dbReference>
<dbReference type="InterPro" id="IPR017932">
    <property type="entry name" value="GATase_2_dom"/>
</dbReference>
<dbReference type="InterPro" id="IPR005855">
    <property type="entry name" value="GFAT"/>
</dbReference>
<dbReference type="InterPro" id="IPR047084">
    <property type="entry name" value="GFAT_N"/>
</dbReference>
<dbReference type="InterPro" id="IPR035466">
    <property type="entry name" value="GlmS/AgaS_SIS"/>
</dbReference>
<dbReference type="InterPro" id="IPR035490">
    <property type="entry name" value="GlmS/FrlB_SIS"/>
</dbReference>
<dbReference type="InterPro" id="IPR029055">
    <property type="entry name" value="Ntn_hydrolases_N"/>
</dbReference>
<dbReference type="InterPro" id="IPR001347">
    <property type="entry name" value="SIS_dom"/>
</dbReference>
<dbReference type="InterPro" id="IPR046348">
    <property type="entry name" value="SIS_dom_sf"/>
</dbReference>
<dbReference type="NCBIfam" id="TIGR01135">
    <property type="entry name" value="glmS"/>
    <property type="match status" value="1"/>
</dbReference>
<dbReference type="NCBIfam" id="NF001484">
    <property type="entry name" value="PRK00331.1"/>
    <property type="match status" value="1"/>
</dbReference>
<dbReference type="PANTHER" id="PTHR10937">
    <property type="entry name" value="GLUCOSAMINE--FRUCTOSE-6-PHOSPHATE AMINOTRANSFERASE, ISOMERIZING"/>
    <property type="match status" value="1"/>
</dbReference>
<dbReference type="PANTHER" id="PTHR10937:SF0">
    <property type="entry name" value="GLUTAMINE--FRUCTOSE-6-PHOSPHATE TRANSAMINASE (ISOMERIZING)"/>
    <property type="match status" value="1"/>
</dbReference>
<dbReference type="Pfam" id="PF13522">
    <property type="entry name" value="GATase_6"/>
    <property type="match status" value="1"/>
</dbReference>
<dbReference type="Pfam" id="PF01380">
    <property type="entry name" value="SIS"/>
    <property type="match status" value="2"/>
</dbReference>
<dbReference type="SUPFAM" id="SSF56235">
    <property type="entry name" value="N-terminal nucleophile aminohydrolases (Ntn hydrolases)"/>
    <property type="match status" value="1"/>
</dbReference>
<dbReference type="SUPFAM" id="SSF53697">
    <property type="entry name" value="SIS domain"/>
    <property type="match status" value="1"/>
</dbReference>
<dbReference type="PROSITE" id="PS51278">
    <property type="entry name" value="GATASE_TYPE_2"/>
    <property type="match status" value="1"/>
</dbReference>
<dbReference type="PROSITE" id="PS51464">
    <property type="entry name" value="SIS"/>
    <property type="match status" value="2"/>
</dbReference>
<proteinExistence type="inferred from homology"/>
<organism>
    <name type="scientific">Chlamydia trachomatis serovar D (strain ATCC VR-885 / DSM 19411 / UW-3/Cx)</name>
    <dbReference type="NCBI Taxonomy" id="272561"/>
    <lineage>
        <taxon>Bacteria</taxon>
        <taxon>Pseudomonadati</taxon>
        <taxon>Chlamydiota</taxon>
        <taxon>Chlamydiia</taxon>
        <taxon>Chlamydiales</taxon>
        <taxon>Chlamydiaceae</taxon>
        <taxon>Chlamydia/Chlamydophila group</taxon>
        <taxon>Chlamydia</taxon>
    </lineage>
</organism>
<keyword id="KW-0032">Aminotransferase</keyword>
<keyword id="KW-0963">Cytoplasm</keyword>
<keyword id="KW-0315">Glutamine amidotransferase</keyword>
<keyword id="KW-1185">Reference proteome</keyword>
<keyword id="KW-0677">Repeat</keyword>
<keyword id="KW-0808">Transferase</keyword>
<evidence type="ECO:0000255" key="1">
    <source>
        <dbReference type="HAMAP-Rule" id="MF_00164"/>
    </source>
</evidence>
<comment type="function">
    <text evidence="1">Catalyzes the first step in hexosamine metabolism, converting fructose-6P into glucosamine-6P using glutamine as a nitrogen source.</text>
</comment>
<comment type="catalytic activity">
    <reaction evidence="1">
        <text>D-fructose 6-phosphate + L-glutamine = D-glucosamine 6-phosphate + L-glutamate</text>
        <dbReference type="Rhea" id="RHEA:13237"/>
        <dbReference type="ChEBI" id="CHEBI:29985"/>
        <dbReference type="ChEBI" id="CHEBI:58359"/>
        <dbReference type="ChEBI" id="CHEBI:58725"/>
        <dbReference type="ChEBI" id="CHEBI:61527"/>
        <dbReference type="EC" id="2.6.1.16"/>
    </reaction>
</comment>
<comment type="subunit">
    <text evidence="1">Homodimer.</text>
</comment>
<comment type="subcellular location">
    <subcellularLocation>
        <location evidence="1">Cytoplasm</location>
    </subcellularLocation>
</comment>
<accession>O84823</accession>
<name>GLMS_CHLTR</name>
<feature type="initiator methionine" description="Removed" evidence="1">
    <location>
        <position position="1"/>
    </location>
</feature>
<feature type="chain" id="PRO_0000135321" description="Glutamine--fructose-6-phosphate aminotransferase [isomerizing]">
    <location>
        <begin position="2"/>
        <end position="606"/>
    </location>
</feature>
<feature type="domain" description="Glutamine amidotransferase type-2" evidence="1">
    <location>
        <begin position="2"/>
        <end position="218"/>
    </location>
</feature>
<feature type="domain" description="SIS 1" evidence="1">
    <location>
        <begin position="278"/>
        <end position="424"/>
    </location>
</feature>
<feature type="domain" description="SIS 2" evidence="1">
    <location>
        <begin position="448"/>
        <end position="596"/>
    </location>
</feature>
<feature type="active site" description="Nucleophile; for GATase activity" evidence="1">
    <location>
        <position position="2"/>
    </location>
</feature>
<feature type="active site" description="For Fru-6P isomerization activity" evidence="1">
    <location>
        <position position="601"/>
    </location>
</feature>
<reference key="1">
    <citation type="journal article" date="1998" name="Science">
        <title>Genome sequence of an obligate intracellular pathogen of humans: Chlamydia trachomatis.</title>
        <authorList>
            <person name="Stephens R.S."/>
            <person name="Kalman S."/>
            <person name="Lammel C.J."/>
            <person name="Fan J."/>
            <person name="Marathe R."/>
            <person name="Aravind L."/>
            <person name="Mitchell W.P."/>
            <person name="Olinger L."/>
            <person name="Tatusov R.L."/>
            <person name="Zhao Q."/>
            <person name="Koonin E.V."/>
            <person name="Davis R.W."/>
        </authorList>
    </citation>
    <scope>NUCLEOTIDE SEQUENCE [LARGE SCALE GENOMIC DNA]</scope>
    <source>
        <strain>ATCC VR-885 / DSM 19411 / UW-3/Cx</strain>
    </source>
</reference>
<gene>
    <name evidence="1" type="primary">glmS</name>
    <name type="ordered locus">CT_816</name>
</gene>
<sequence>MCGIFGYLGEKNAVPLVLEGLSKLEYRGYDSAGIATLVEGRLFVEKAVGPVSQLCSAVSSDIHSQAAIGHTRWATHGEPSRFNAHPHVDMDASCALVHNGIIENFQKLKEELEEQGVVFSSDTDTEVIVQLFARRYKETRDLIQSFSWTLKRLQGSFACALMHQDHPEVLLCAAHESPLILGLGEDEVFISSDIHAFLKYSGCTQTLASGELAVLRIGKSIETYNFELARIQKEVRCIDHTEDSLDKKGFDYYMLKELYEQPEVFERILHLTCEENGFTESFLKGFSLDEIQSLHIVACGSSYHAGYLAKYVIESIASIPVYVETASEFRYRQPYIAEHSLAILISQSGETADTLAALNEFRKLSKARVLGICNVRESALASRVDHCLFIEAGLEVGVASTKAFTAQLLLLILLGLRLANHRQVIAQEDLAQAIQGLKDLPNLTRLFLDSSIHDWRCRQIEETSFIFLGRRFMYPICMEAALKLKEIAYVEANAYPAGEMKHGPIALIREGTPVIVYCGDRSVYTKTIGAIMEVKARKAYVIALAPESNRDIAAVSDEQIYIPDSHDLAAPILFTIAGQIMAYTMALQRGTEVDRPRNLAKSVTVE</sequence>
<protein>
    <recommendedName>
        <fullName evidence="1">Glutamine--fructose-6-phosphate aminotransferase [isomerizing]</fullName>
        <ecNumber evidence="1">2.6.1.16</ecNumber>
    </recommendedName>
    <alternativeName>
        <fullName evidence="1">D-fructose-6-phosphate amidotransferase</fullName>
    </alternativeName>
    <alternativeName>
        <fullName evidence="1">GFAT</fullName>
    </alternativeName>
    <alternativeName>
        <fullName evidence="1">Glucosamine-6-phosphate synthase</fullName>
    </alternativeName>
    <alternativeName>
        <fullName evidence="1">Hexosephosphate aminotransferase</fullName>
    </alternativeName>
    <alternativeName>
        <fullName evidence="1">L-glutamine--D-fructose-6-phosphate amidotransferase</fullName>
    </alternativeName>
</protein>